<name>MDTD_CROS8</name>
<reference key="1">
    <citation type="journal article" date="2010" name="PLoS ONE">
        <title>Genome sequence of Cronobacter sakazakii BAA-894 and comparative genomic hybridization analysis with other Cronobacter species.</title>
        <authorList>
            <person name="Kucerova E."/>
            <person name="Clifton S.W."/>
            <person name="Xia X.Q."/>
            <person name="Long F."/>
            <person name="Porwollik S."/>
            <person name="Fulton L."/>
            <person name="Fronick C."/>
            <person name="Minx P."/>
            <person name="Kyung K."/>
            <person name="Warren W."/>
            <person name="Fulton R."/>
            <person name="Feng D."/>
            <person name="Wollam A."/>
            <person name="Shah N."/>
            <person name="Bhonagiri V."/>
            <person name="Nash W.E."/>
            <person name="Hallsworth-Pepin K."/>
            <person name="Wilson R.K."/>
            <person name="McClelland M."/>
            <person name="Forsythe S.J."/>
        </authorList>
    </citation>
    <scope>NUCLEOTIDE SEQUENCE [LARGE SCALE GENOMIC DNA]</scope>
    <source>
        <strain>ATCC BAA-894</strain>
    </source>
</reference>
<keyword id="KW-0997">Cell inner membrane</keyword>
<keyword id="KW-1003">Cell membrane</keyword>
<keyword id="KW-0472">Membrane</keyword>
<keyword id="KW-1185">Reference proteome</keyword>
<keyword id="KW-0812">Transmembrane</keyword>
<keyword id="KW-1133">Transmembrane helix</keyword>
<keyword id="KW-0813">Transport</keyword>
<feature type="chain" id="PRO_1000087927" description="Putative multidrug resistance protein MdtD">
    <location>
        <begin position="1"/>
        <end position="471"/>
    </location>
</feature>
<feature type="transmembrane region" description="Helical" evidence="1">
    <location>
        <begin position="12"/>
        <end position="32"/>
    </location>
</feature>
<feature type="transmembrane region" description="Helical" evidence="1">
    <location>
        <begin position="49"/>
        <end position="69"/>
    </location>
</feature>
<feature type="transmembrane region" description="Helical" evidence="1">
    <location>
        <begin position="77"/>
        <end position="97"/>
    </location>
</feature>
<feature type="transmembrane region" description="Helical" evidence="1">
    <location>
        <begin position="106"/>
        <end position="126"/>
    </location>
</feature>
<feature type="transmembrane region" description="Helical" evidence="1">
    <location>
        <begin position="138"/>
        <end position="158"/>
    </location>
</feature>
<feature type="transmembrane region" description="Helical" evidence="1">
    <location>
        <begin position="165"/>
        <end position="185"/>
    </location>
</feature>
<feature type="transmembrane region" description="Helical" evidence="1">
    <location>
        <begin position="197"/>
        <end position="217"/>
    </location>
</feature>
<feature type="transmembrane region" description="Helical" evidence="1">
    <location>
        <begin position="225"/>
        <end position="245"/>
    </location>
</feature>
<feature type="transmembrane region" description="Helical" evidence="1">
    <location>
        <begin position="263"/>
        <end position="285"/>
    </location>
</feature>
<feature type="transmembrane region" description="Helical" evidence="1">
    <location>
        <begin position="290"/>
        <end position="312"/>
    </location>
</feature>
<feature type="transmembrane region" description="Helical" evidence="1">
    <location>
        <begin position="342"/>
        <end position="362"/>
    </location>
</feature>
<feature type="transmembrane region" description="Helical" evidence="1">
    <location>
        <begin position="396"/>
        <end position="416"/>
    </location>
</feature>
<feature type="transmembrane region" description="Helical" evidence="1">
    <location>
        <begin position="431"/>
        <end position="451"/>
    </location>
</feature>
<accession>A7MHI9</accession>
<gene>
    <name evidence="1" type="primary">mdtD</name>
    <name type="ordered locus">ESA_01141</name>
</gene>
<dbReference type="EMBL" id="CP000783">
    <property type="protein sequence ID" value="ABU76408.1"/>
    <property type="molecule type" value="Genomic_DNA"/>
</dbReference>
<dbReference type="RefSeq" id="WP_012124310.1">
    <property type="nucleotide sequence ID" value="NC_009778.1"/>
</dbReference>
<dbReference type="SMR" id="A7MHI9"/>
<dbReference type="KEGG" id="esa:ESA_01141"/>
<dbReference type="PATRIC" id="fig|290339.8.peg.1011"/>
<dbReference type="HOGENOM" id="CLU_000960_28_0_6"/>
<dbReference type="Proteomes" id="UP000000260">
    <property type="component" value="Chromosome"/>
</dbReference>
<dbReference type="GO" id="GO:0005886">
    <property type="term" value="C:plasma membrane"/>
    <property type="evidence" value="ECO:0007669"/>
    <property type="project" value="UniProtKB-SubCell"/>
</dbReference>
<dbReference type="GO" id="GO:0022857">
    <property type="term" value="F:transmembrane transporter activity"/>
    <property type="evidence" value="ECO:0007669"/>
    <property type="project" value="UniProtKB-UniRule"/>
</dbReference>
<dbReference type="CDD" id="cd17503">
    <property type="entry name" value="MFS_LmrB_MDR_like"/>
    <property type="match status" value="1"/>
</dbReference>
<dbReference type="FunFam" id="1.20.1250.20:FF:000021">
    <property type="entry name" value="Putative multidrug resistance protein MdtD"/>
    <property type="match status" value="1"/>
</dbReference>
<dbReference type="FunFam" id="1.20.1720.10:FF:000001">
    <property type="entry name" value="Putative multidrug resistance protein MdtD"/>
    <property type="match status" value="1"/>
</dbReference>
<dbReference type="Gene3D" id="1.20.1250.20">
    <property type="entry name" value="MFS general substrate transporter like domains"/>
    <property type="match status" value="1"/>
</dbReference>
<dbReference type="Gene3D" id="1.20.1720.10">
    <property type="entry name" value="Multidrug resistance protein D"/>
    <property type="match status" value="1"/>
</dbReference>
<dbReference type="HAMAP" id="MF_01577">
    <property type="entry name" value="MFS_MdtD"/>
    <property type="match status" value="1"/>
</dbReference>
<dbReference type="InterPro" id="IPR011701">
    <property type="entry name" value="MFS"/>
</dbReference>
<dbReference type="InterPro" id="IPR020846">
    <property type="entry name" value="MFS_dom"/>
</dbReference>
<dbReference type="InterPro" id="IPR036259">
    <property type="entry name" value="MFS_trans_sf"/>
</dbReference>
<dbReference type="InterPro" id="IPR023721">
    <property type="entry name" value="Multi-R_MdtD"/>
</dbReference>
<dbReference type="NCBIfam" id="NF007799">
    <property type="entry name" value="PRK10504.1"/>
    <property type="match status" value="1"/>
</dbReference>
<dbReference type="PANTHER" id="PTHR42718:SF46">
    <property type="entry name" value="BLR6921 PROTEIN"/>
    <property type="match status" value="1"/>
</dbReference>
<dbReference type="PANTHER" id="PTHR42718">
    <property type="entry name" value="MAJOR FACILITATOR SUPERFAMILY MULTIDRUG TRANSPORTER MFSC"/>
    <property type="match status" value="1"/>
</dbReference>
<dbReference type="Pfam" id="PF07690">
    <property type="entry name" value="MFS_1"/>
    <property type="match status" value="1"/>
</dbReference>
<dbReference type="PRINTS" id="PR01036">
    <property type="entry name" value="TCRTETB"/>
</dbReference>
<dbReference type="SUPFAM" id="SSF103473">
    <property type="entry name" value="MFS general substrate transporter"/>
    <property type="match status" value="1"/>
</dbReference>
<dbReference type="PROSITE" id="PS50850">
    <property type="entry name" value="MFS"/>
    <property type="match status" value="1"/>
</dbReference>
<evidence type="ECO:0000255" key="1">
    <source>
        <dbReference type="HAMAP-Rule" id="MF_01577"/>
    </source>
</evidence>
<organism>
    <name type="scientific">Cronobacter sakazakii (strain ATCC BAA-894)</name>
    <name type="common">Enterobacter sakazakii</name>
    <dbReference type="NCBI Taxonomy" id="290339"/>
    <lineage>
        <taxon>Bacteria</taxon>
        <taxon>Pseudomonadati</taxon>
        <taxon>Pseudomonadota</taxon>
        <taxon>Gammaproteobacteria</taxon>
        <taxon>Enterobacterales</taxon>
        <taxon>Enterobacteriaceae</taxon>
        <taxon>Cronobacter</taxon>
    </lineage>
</organism>
<comment type="subcellular location">
    <subcellularLocation>
        <location evidence="1">Cell inner membrane</location>
        <topology evidence="1">Multi-pass membrane protein</topology>
    </subcellularLocation>
</comment>
<comment type="similarity">
    <text evidence="1">Belongs to the major facilitator superfamily. TCR/Tet family.</text>
</comment>
<proteinExistence type="inferred from homology"/>
<protein>
    <recommendedName>
        <fullName evidence="1">Putative multidrug resistance protein MdtD</fullName>
    </recommendedName>
</protein>
<sequence>MTDLPQNVRWQLWIVAFGFFMQALDTTIVNTALPSMAASLGESPLRMHMVIVSYVLTVAVMLPASGWLADRVGVRNIFFTAIVLFTLGSLFCAQSSTLNELVAARVLQGIGGAMMVPVGRLTVMKIVPRDQYMAAMTFVTLPGQVGPLLGPALGGLLVEYASWHWIFLINLPVGIAGAAATLWLMPNYTMQTRRFDFSGFLLLAFGMAALTIALDGYRSTGLSPAGLGALVAGGSAATLLYLWHARGNERALFSLRLFNTRTFSLGLFGSLCGRIGSGMLPFMTPVFLQIGLGFSPFHAGLMMMPMVLGSMGIKRIVVQVVNRFGYRRVLVASTLALALVTLLFMGVALAGWYWLLPVVMLFQGMVNSVRFSTMNTLTLRDLPDEMASSGNSLLSMVMQLSMSLGVSIAGLLLGAFGHNQLAADSGDAHGIFFWTYLCMALIIALPALVFARVPDDISKNAVIARRKRSAS</sequence>